<protein>
    <recommendedName>
        <fullName evidence="1">Probable tRNA sulfurtransferase</fullName>
        <ecNumber evidence="1">2.8.1.4</ecNumber>
    </recommendedName>
    <alternativeName>
        <fullName evidence="1">Sulfur carrier protein ThiS sulfurtransferase</fullName>
    </alternativeName>
    <alternativeName>
        <fullName evidence="1">Thiamine biosynthesis protein ThiI</fullName>
    </alternativeName>
    <alternativeName>
        <fullName evidence="1">tRNA 4-thiouridine synthase</fullName>
    </alternativeName>
</protein>
<dbReference type="EC" id="2.8.1.4" evidence="1"/>
<dbReference type="EMBL" id="AE007317">
    <property type="protein sequence ID" value="AAK99588.1"/>
    <property type="molecule type" value="Genomic_DNA"/>
</dbReference>
<dbReference type="PIR" id="H97969">
    <property type="entry name" value="H97969"/>
</dbReference>
<dbReference type="RefSeq" id="NP_358378.1">
    <property type="nucleotide sequence ID" value="NC_003098.1"/>
</dbReference>
<dbReference type="RefSeq" id="WP_001200076.1">
    <property type="nucleotide sequence ID" value="NC_003098.1"/>
</dbReference>
<dbReference type="SMR" id="Q8DQ92"/>
<dbReference type="STRING" id="171101.spr0784"/>
<dbReference type="KEGG" id="spr:spr0784"/>
<dbReference type="PATRIC" id="fig|171101.6.peg.868"/>
<dbReference type="eggNOG" id="COG0301">
    <property type="taxonomic scope" value="Bacteria"/>
</dbReference>
<dbReference type="HOGENOM" id="CLU_037952_4_0_9"/>
<dbReference type="UniPathway" id="UPA00060"/>
<dbReference type="Proteomes" id="UP000000586">
    <property type="component" value="Chromosome"/>
</dbReference>
<dbReference type="GO" id="GO:0005829">
    <property type="term" value="C:cytosol"/>
    <property type="evidence" value="ECO:0000318"/>
    <property type="project" value="GO_Central"/>
</dbReference>
<dbReference type="GO" id="GO:0005524">
    <property type="term" value="F:ATP binding"/>
    <property type="evidence" value="ECO:0007669"/>
    <property type="project" value="UniProtKB-UniRule"/>
</dbReference>
<dbReference type="GO" id="GO:0004810">
    <property type="term" value="F:CCA tRNA nucleotidyltransferase activity"/>
    <property type="evidence" value="ECO:0007669"/>
    <property type="project" value="InterPro"/>
</dbReference>
<dbReference type="GO" id="GO:0000049">
    <property type="term" value="F:tRNA binding"/>
    <property type="evidence" value="ECO:0007669"/>
    <property type="project" value="UniProtKB-UniRule"/>
</dbReference>
<dbReference type="GO" id="GO:0140741">
    <property type="term" value="F:tRNA-uracil-4 sulfurtransferase activity"/>
    <property type="evidence" value="ECO:0007669"/>
    <property type="project" value="UniProtKB-EC"/>
</dbReference>
<dbReference type="GO" id="GO:0009228">
    <property type="term" value="P:thiamine biosynthetic process"/>
    <property type="evidence" value="ECO:0007669"/>
    <property type="project" value="UniProtKB-KW"/>
</dbReference>
<dbReference type="GO" id="GO:0009229">
    <property type="term" value="P:thiamine diphosphate biosynthetic process"/>
    <property type="evidence" value="ECO:0007669"/>
    <property type="project" value="UniProtKB-UniRule"/>
</dbReference>
<dbReference type="GO" id="GO:0052837">
    <property type="term" value="P:thiazole biosynthetic process"/>
    <property type="evidence" value="ECO:0000318"/>
    <property type="project" value="GO_Central"/>
</dbReference>
<dbReference type="GO" id="GO:0002937">
    <property type="term" value="P:tRNA 4-thiouridine biosynthesis"/>
    <property type="evidence" value="ECO:0000318"/>
    <property type="project" value="GO_Central"/>
</dbReference>
<dbReference type="CDD" id="cd01712">
    <property type="entry name" value="PPase_ThiI"/>
    <property type="match status" value="1"/>
</dbReference>
<dbReference type="CDD" id="cd11716">
    <property type="entry name" value="THUMP_ThiI"/>
    <property type="match status" value="1"/>
</dbReference>
<dbReference type="FunFam" id="3.30.2130.30:FF:000006">
    <property type="entry name" value="Probable tRNA sulfurtransferase"/>
    <property type="match status" value="1"/>
</dbReference>
<dbReference type="FunFam" id="3.40.50.620:FF:000053">
    <property type="entry name" value="Probable tRNA sulfurtransferase"/>
    <property type="match status" value="1"/>
</dbReference>
<dbReference type="Gene3D" id="3.30.2130.30">
    <property type="match status" value="1"/>
</dbReference>
<dbReference type="Gene3D" id="3.40.50.620">
    <property type="entry name" value="HUPs"/>
    <property type="match status" value="1"/>
</dbReference>
<dbReference type="HAMAP" id="MF_00021">
    <property type="entry name" value="ThiI"/>
    <property type="match status" value="1"/>
</dbReference>
<dbReference type="InterPro" id="IPR014729">
    <property type="entry name" value="Rossmann-like_a/b/a_fold"/>
</dbReference>
<dbReference type="InterPro" id="IPR020536">
    <property type="entry name" value="ThiI_AANH"/>
</dbReference>
<dbReference type="InterPro" id="IPR054173">
    <property type="entry name" value="ThiI_fer"/>
</dbReference>
<dbReference type="InterPro" id="IPR049961">
    <property type="entry name" value="ThiI_N"/>
</dbReference>
<dbReference type="InterPro" id="IPR004114">
    <property type="entry name" value="THUMP_dom"/>
</dbReference>
<dbReference type="InterPro" id="IPR049962">
    <property type="entry name" value="THUMP_ThiI"/>
</dbReference>
<dbReference type="InterPro" id="IPR003720">
    <property type="entry name" value="tRNA_STrfase"/>
</dbReference>
<dbReference type="InterPro" id="IPR050102">
    <property type="entry name" value="tRNA_sulfurtransferase_ThiI"/>
</dbReference>
<dbReference type="NCBIfam" id="TIGR00342">
    <property type="entry name" value="tRNA uracil 4-sulfurtransferase ThiI"/>
    <property type="match status" value="1"/>
</dbReference>
<dbReference type="PANTHER" id="PTHR43209">
    <property type="entry name" value="TRNA SULFURTRANSFERASE"/>
    <property type="match status" value="1"/>
</dbReference>
<dbReference type="PANTHER" id="PTHR43209:SF1">
    <property type="entry name" value="TRNA SULFURTRANSFERASE"/>
    <property type="match status" value="1"/>
</dbReference>
<dbReference type="Pfam" id="PF02568">
    <property type="entry name" value="ThiI"/>
    <property type="match status" value="1"/>
</dbReference>
<dbReference type="Pfam" id="PF22025">
    <property type="entry name" value="ThiI_fer"/>
    <property type="match status" value="1"/>
</dbReference>
<dbReference type="Pfam" id="PF02926">
    <property type="entry name" value="THUMP"/>
    <property type="match status" value="1"/>
</dbReference>
<dbReference type="SMART" id="SM00981">
    <property type="entry name" value="THUMP"/>
    <property type="match status" value="1"/>
</dbReference>
<dbReference type="SUPFAM" id="SSF52402">
    <property type="entry name" value="Adenine nucleotide alpha hydrolases-like"/>
    <property type="match status" value="1"/>
</dbReference>
<dbReference type="SUPFAM" id="SSF143437">
    <property type="entry name" value="THUMP domain-like"/>
    <property type="match status" value="1"/>
</dbReference>
<dbReference type="PROSITE" id="PS51165">
    <property type="entry name" value="THUMP"/>
    <property type="match status" value="1"/>
</dbReference>
<evidence type="ECO:0000255" key="1">
    <source>
        <dbReference type="HAMAP-Rule" id="MF_00021"/>
    </source>
</evidence>
<gene>
    <name evidence="1" type="primary">thiI</name>
    <name type="ordered locus">spr0784</name>
</gene>
<organism>
    <name type="scientific">Streptococcus pneumoniae (strain ATCC BAA-255 / R6)</name>
    <dbReference type="NCBI Taxonomy" id="171101"/>
    <lineage>
        <taxon>Bacteria</taxon>
        <taxon>Bacillati</taxon>
        <taxon>Bacillota</taxon>
        <taxon>Bacilli</taxon>
        <taxon>Lactobacillales</taxon>
        <taxon>Streptococcaceae</taxon>
        <taxon>Streptococcus</taxon>
    </lineage>
</organism>
<comment type="function">
    <text evidence="1">Catalyzes the ATP-dependent transfer of a sulfur to tRNA to produce 4-thiouridine in position 8 of tRNAs, which functions as a near-UV photosensor. Also catalyzes the transfer of sulfur to the sulfur carrier protein ThiS, forming ThiS-thiocarboxylate. This is a step in the synthesis of thiazole, in the thiamine biosynthesis pathway. The sulfur is donated as persulfide by IscS.</text>
</comment>
<comment type="catalytic activity">
    <reaction evidence="1">
        <text>[ThiI sulfur-carrier protein]-S-sulfanyl-L-cysteine + a uridine in tRNA + 2 reduced [2Fe-2S]-[ferredoxin] + ATP + H(+) = [ThiI sulfur-carrier protein]-L-cysteine + a 4-thiouridine in tRNA + 2 oxidized [2Fe-2S]-[ferredoxin] + AMP + diphosphate</text>
        <dbReference type="Rhea" id="RHEA:24176"/>
        <dbReference type="Rhea" id="RHEA-COMP:10000"/>
        <dbReference type="Rhea" id="RHEA-COMP:10001"/>
        <dbReference type="Rhea" id="RHEA-COMP:13337"/>
        <dbReference type="Rhea" id="RHEA-COMP:13338"/>
        <dbReference type="Rhea" id="RHEA-COMP:13339"/>
        <dbReference type="Rhea" id="RHEA-COMP:13340"/>
        <dbReference type="ChEBI" id="CHEBI:15378"/>
        <dbReference type="ChEBI" id="CHEBI:29950"/>
        <dbReference type="ChEBI" id="CHEBI:30616"/>
        <dbReference type="ChEBI" id="CHEBI:33019"/>
        <dbReference type="ChEBI" id="CHEBI:33737"/>
        <dbReference type="ChEBI" id="CHEBI:33738"/>
        <dbReference type="ChEBI" id="CHEBI:61963"/>
        <dbReference type="ChEBI" id="CHEBI:65315"/>
        <dbReference type="ChEBI" id="CHEBI:136798"/>
        <dbReference type="ChEBI" id="CHEBI:456215"/>
        <dbReference type="EC" id="2.8.1.4"/>
    </reaction>
</comment>
<comment type="catalytic activity">
    <reaction evidence="1">
        <text>[ThiS sulfur-carrier protein]-C-terminal Gly-Gly-AMP + S-sulfanyl-L-cysteinyl-[cysteine desulfurase] + AH2 = [ThiS sulfur-carrier protein]-C-terminal-Gly-aminoethanethioate + L-cysteinyl-[cysteine desulfurase] + A + AMP + 2 H(+)</text>
        <dbReference type="Rhea" id="RHEA:43340"/>
        <dbReference type="Rhea" id="RHEA-COMP:12157"/>
        <dbReference type="Rhea" id="RHEA-COMP:12158"/>
        <dbReference type="Rhea" id="RHEA-COMP:12910"/>
        <dbReference type="Rhea" id="RHEA-COMP:19908"/>
        <dbReference type="ChEBI" id="CHEBI:13193"/>
        <dbReference type="ChEBI" id="CHEBI:15378"/>
        <dbReference type="ChEBI" id="CHEBI:17499"/>
        <dbReference type="ChEBI" id="CHEBI:29950"/>
        <dbReference type="ChEBI" id="CHEBI:61963"/>
        <dbReference type="ChEBI" id="CHEBI:90618"/>
        <dbReference type="ChEBI" id="CHEBI:232372"/>
        <dbReference type="ChEBI" id="CHEBI:456215"/>
    </reaction>
</comment>
<comment type="pathway">
    <text evidence="1">Cofactor biosynthesis; thiamine diphosphate biosynthesis.</text>
</comment>
<comment type="subcellular location">
    <subcellularLocation>
        <location evidence="1">Cytoplasm</location>
    </subcellularLocation>
</comment>
<comment type="similarity">
    <text evidence="1">Belongs to the ThiI family.</text>
</comment>
<accession>Q8DQ92</accession>
<proteinExistence type="inferred from homology"/>
<feature type="chain" id="PRO_0000154875" description="Probable tRNA sulfurtransferase">
    <location>
        <begin position="1"/>
        <end position="404"/>
    </location>
</feature>
<feature type="domain" description="THUMP" evidence="1">
    <location>
        <begin position="60"/>
        <end position="165"/>
    </location>
</feature>
<feature type="binding site" evidence="1">
    <location>
        <begin position="183"/>
        <end position="184"/>
    </location>
    <ligand>
        <name>ATP</name>
        <dbReference type="ChEBI" id="CHEBI:30616"/>
    </ligand>
</feature>
<feature type="binding site" evidence="1">
    <location>
        <begin position="208"/>
        <end position="209"/>
    </location>
    <ligand>
        <name>ATP</name>
        <dbReference type="ChEBI" id="CHEBI:30616"/>
    </ligand>
</feature>
<feature type="binding site" evidence="1">
    <location>
        <position position="265"/>
    </location>
    <ligand>
        <name>ATP</name>
        <dbReference type="ChEBI" id="CHEBI:30616"/>
    </ligand>
</feature>
<feature type="binding site" evidence="1">
    <location>
        <position position="287"/>
    </location>
    <ligand>
        <name>ATP</name>
        <dbReference type="ChEBI" id="CHEBI:30616"/>
    </ligand>
</feature>
<feature type="binding site" evidence="1">
    <location>
        <position position="296"/>
    </location>
    <ligand>
        <name>ATP</name>
        <dbReference type="ChEBI" id="CHEBI:30616"/>
    </ligand>
</feature>
<keyword id="KW-0067">ATP-binding</keyword>
<keyword id="KW-0963">Cytoplasm</keyword>
<keyword id="KW-0547">Nucleotide-binding</keyword>
<keyword id="KW-1185">Reference proteome</keyword>
<keyword id="KW-0694">RNA-binding</keyword>
<keyword id="KW-0784">Thiamine biosynthesis</keyword>
<keyword id="KW-0808">Transferase</keyword>
<keyword id="KW-0820">tRNA-binding</keyword>
<sequence>MQYSEIMIRYGELSTKGKNRMRFINKLRNNISDVLSIYSQVKVTADRDRAHAYLNGADYTAVAESLKQVFGIQNFSPVYKVEKSVEVLKSSVQEIMRDIYKEGMTFKISSKRSDHNFELDSRELNQTLGGAVFEAIPNVQVQMKSPDINLQVEIREEAAYLSYETIRGAGGLPVGTSGKGMLMLSGGIDSPVAGYLALKRGVDIEAVHFASPPYTSPGALKKAQDLTRKLTKFGGNIQFIEVPFTEIQEEIKAKAPEAYLMTLTRRFMMRITDRIREVRNGLVIINGESLGQVASQTLESMKAINAVTNTPIIRPVVTMDKLEIIDIAQEIDTFDISIQPFEDCCTIFAPDRPKTNPKIKNAEQYEARMDVEGLVERAVAGIMITEITPQAEKDEVDDLIDNLL</sequence>
<reference key="1">
    <citation type="journal article" date="2001" name="J. Bacteriol.">
        <title>Genome of the bacterium Streptococcus pneumoniae strain R6.</title>
        <authorList>
            <person name="Hoskins J."/>
            <person name="Alborn W.E. Jr."/>
            <person name="Arnold J."/>
            <person name="Blaszczak L.C."/>
            <person name="Burgett S."/>
            <person name="DeHoff B.S."/>
            <person name="Estrem S.T."/>
            <person name="Fritz L."/>
            <person name="Fu D.-J."/>
            <person name="Fuller W."/>
            <person name="Geringer C."/>
            <person name="Gilmour R."/>
            <person name="Glass J.S."/>
            <person name="Khoja H."/>
            <person name="Kraft A.R."/>
            <person name="Lagace R.E."/>
            <person name="LeBlanc D.J."/>
            <person name="Lee L.N."/>
            <person name="Lefkowitz E.J."/>
            <person name="Lu J."/>
            <person name="Matsushima P."/>
            <person name="McAhren S.M."/>
            <person name="McHenney M."/>
            <person name="McLeaster K."/>
            <person name="Mundy C.W."/>
            <person name="Nicas T.I."/>
            <person name="Norris F.H."/>
            <person name="O'Gara M."/>
            <person name="Peery R.B."/>
            <person name="Robertson G.T."/>
            <person name="Rockey P."/>
            <person name="Sun P.-M."/>
            <person name="Winkler M.E."/>
            <person name="Yang Y."/>
            <person name="Young-Bellido M."/>
            <person name="Zhao G."/>
            <person name="Zook C.A."/>
            <person name="Baltz R.H."/>
            <person name="Jaskunas S.R."/>
            <person name="Rosteck P.R. Jr."/>
            <person name="Skatrud P.L."/>
            <person name="Glass J.I."/>
        </authorList>
    </citation>
    <scope>NUCLEOTIDE SEQUENCE [LARGE SCALE GENOMIC DNA]</scope>
    <source>
        <strain>ATCC BAA-255 / R6</strain>
    </source>
</reference>
<name>THII_STRR6</name>